<sequence>MGKIIGIDLGTTNSCLAIMDGKTAKVIENAEGHRTTPSVVAYTDSGEILVGQAAKRQAVTNPDNTFFAIKRLIGRKYDDKAVQEDIKKKVPYAVIKADNGDAWVATKEGKKMAPPQVSAEVLRKMKKTAEDYLGEPVTEAVITVPAYFNDSQRQATKDAGKIAGLEVKRIINEPTAAALAYGVDSKKGEQTVAVYDLGGGTFDISIIEIADVDGDNQIEVLSTNGDTFLGGEDFDLALMNYLIDEFKKEQGIDLHNDKLALQRVREAAEKAKVELSSAQQTDVNLPYITADATGPKHLNIKVTRAKFESLVSDLVMRSLEPCKKALEDAGLSKSDITEVLLVGGQTRMPLVQEKVKEFFGKEPRKDVNPDEAVAVGAAIQGGVLAGDVKDVLLLDVTPLSLGIETMGGVMTKLIERNTTIPTKKSQVFSTAEDNQPAVTIHVLQGEREMASANKSLGRFDLADIPPAPRGMPQIEVTFDIDANGILNVSAKDKATGKEQNIVIKSSSGLSEEDIEKMVQDAEANAEADKKFHDLVTARNTADNLIHSSRKAIQELGDKVTAAEKEKIEEACKELEAATKSDDKQAIEAKTKALEEAFAPIAQKAYAEQAQAAGAQGGAKAEEPKKEEDVVDADFEDVEDDKK</sequence>
<proteinExistence type="inferred from homology"/>
<gene>
    <name evidence="1" type="primary">dnaK</name>
    <name type="ordered locus">FTN_1284</name>
</gene>
<feature type="chain" id="PRO_1000059564" description="Chaperone protein DnaK">
    <location>
        <begin position="1"/>
        <end position="642"/>
    </location>
</feature>
<feature type="region of interest" description="Disordered" evidence="2">
    <location>
        <begin position="609"/>
        <end position="642"/>
    </location>
</feature>
<feature type="compositionally biased region" description="Acidic residues" evidence="2">
    <location>
        <begin position="628"/>
        <end position="642"/>
    </location>
</feature>
<feature type="modified residue" description="Phosphothreonine; by autocatalysis" evidence="1">
    <location>
        <position position="201"/>
    </location>
</feature>
<comment type="function">
    <text evidence="1">Acts as a chaperone.</text>
</comment>
<comment type="induction">
    <text evidence="1">By stress conditions e.g. heat shock.</text>
</comment>
<comment type="similarity">
    <text evidence="1">Belongs to the heat shock protein 70 family.</text>
</comment>
<evidence type="ECO:0000255" key="1">
    <source>
        <dbReference type="HAMAP-Rule" id="MF_00332"/>
    </source>
</evidence>
<evidence type="ECO:0000256" key="2">
    <source>
        <dbReference type="SAM" id="MobiDB-lite"/>
    </source>
</evidence>
<organism>
    <name type="scientific">Francisella tularensis subsp. novicida (strain U112)</name>
    <dbReference type="NCBI Taxonomy" id="401614"/>
    <lineage>
        <taxon>Bacteria</taxon>
        <taxon>Pseudomonadati</taxon>
        <taxon>Pseudomonadota</taxon>
        <taxon>Gammaproteobacteria</taxon>
        <taxon>Thiotrichales</taxon>
        <taxon>Francisellaceae</taxon>
        <taxon>Francisella</taxon>
    </lineage>
</organism>
<accession>A0Q7F0</accession>
<protein>
    <recommendedName>
        <fullName evidence="1">Chaperone protein DnaK</fullName>
    </recommendedName>
    <alternativeName>
        <fullName evidence="1">HSP70</fullName>
    </alternativeName>
    <alternativeName>
        <fullName evidence="1">Heat shock 70 kDa protein</fullName>
    </alternativeName>
    <alternativeName>
        <fullName evidence="1">Heat shock protein 70</fullName>
    </alternativeName>
</protein>
<name>DNAK_FRATN</name>
<reference key="1">
    <citation type="journal article" date="2007" name="Genome Biol.">
        <title>Comparison of Francisella tularensis genomes reveals evolutionary events associated with the emergence of human pathogenic strains.</title>
        <authorList>
            <person name="Rohmer L."/>
            <person name="Fong C."/>
            <person name="Abmayr S."/>
            <person name="Wasnick M."/>
            <person name="Larson Freeman T.J."/>
            <person name="Radey M."/>
            <person name="Guina T."/>
            <person name="Svensson K."/>
            <person name="Hayden H.S."/>
            <person name="Jacobs M."/>
            <person name="Gallagher L.A."/>
            <person name="Manoil C."/>
            <person name="Ernst R.K."/>
            <person name="Drees B."/>
            <person name="Buckley D."/>
            <person name="Haugen E."/>
            <person name="Bovee D."/>
            <person name="Zhou Y."/>
            <person name="Chang J."/>
            <person name="Levy R."/>
            <person name="Lim R."/>
            <person name="Gillett W."/>
            <person name="Guenthener D."/>
            <person name="Kang A."/>
            <person name="Shaffer S.A."/>
            <person name="Taylor G."/>
            <person name="Chen J."/>
            <person name="Gallis B."/>
            <person name="D'Argenio D.A."/>
            <person name="Forsman M."/>
            <person name="Olson M.V."/>
            <person name="Goodlett D.R."/>
            <person name="Kaul R."/>
            <person name="Miller S.I."/>
            <person name="Brittnacher M.J."/>
        </authorList>
    </citation>
    <scope>NUCLEOTIDE SEQUENCE [LARGE SCALE GENOMIC DNA]</scope>
    <source>
        <strain>U112</strain>
    </source>
</reference>
<dbReference type="EMBL" id="CP000439">
    <property type="protein sequence ID" value="ABK90165.1"/>
    <property type="molecule type" value="Genomic_DNA"/>
</dbReference>
<dbReference type="RefSeq" id="WP_003040064.1">
    <property type="nucleotide sequence ID" value="NC_008601.1"/>
</dbReference>
<dbReference type="SMR" id="A0Q7F0"/>
<dbReference type="KEGG" id="ftn:FTN_1284"/>
<dbReference type="KEGG" id="ftx:AW25_722"/>
<dbReference type="BioCyc" id="FTUL401614:G1G75-1329-MONOMER"/>
<dbReference type="Proteomes" id="UP000000762">
    <property type="component" value="Chromosome"/>
</dbReference>
<dbReference type="GO" id="GO:0005524">
    <property type="term" value="F:ATP binding"/>
    <property type="evidence" value="ECO:0007669"/>
    <property type="project" value="UniProtKB-UniRule"/>
</dbReference>
<dbReference type="GO" id="GO:0140662">
    <property type="term" value="F:ATP-dependent protein folding chaperone"/>
    <property type="evidence" value="ECO:0007669"/>
    <property type="project" value="InterPro"/>
</dbReference>
<dbReference type="GO" id="GO:0051082">
    <property type="term" value="F:unfolded protein binding"/>
    <property type="evidence" value="ECO:0007669"/>
    <property type="project" value="InterPro"/>
</dbReference>
<dbReference type="CDD" id="cd10234">
    <property type="entry name" value="ASKHA_NBD_HSP70_DnaK-like"/>
    <property type="match status" value="1"/>
</dbReference>
<dbReference type="FunFam" id="2.60.34.10:FF:000014">
    <property type="entry name" value="Chaperone protein DnaK HSP70"/>
    <property type="match status" value="1"/>
</dbReference>
<dbReference type="FunFam" id="3.30.30.30:FF:000003">
    <property type="entry name" value="Heat shock protein 9"/>
    <property type="match status" value="1"/>
</dbReference>
<dbReference type="FunFam" id="1.20.1270.10:FF:000001">
    <property type="entry name" value="Molecular chaperone DnaK"/>
    <property type="match status" value="1"/>
</dbReference>
<dbReference type="FunFam" id="3.30.420.40:FF:000004">
    <property type="entry name" value="Molecular chaperone DnaK"/>
    <property type="match status" value="1"/>
</dbReference>
<dbReference type="FunFam" id="3.90.640.10:FF:000003">
    <property type="entry name" value="Molecular chaperone DnaK"/>
    <property type="match status" value="1"/>
</dbReference>
<dbReference type="Gene3D" id="1.20.1270.10">
    <property type="match status" value="1"/>
</dbReference>
<dbReference type="Gene3D" id="3.30.420.40">
    <property type="match status" value="2"/>
</dbReference>
<dbReference type="Gene3D" id="3.90.640.10">
    <property type="entry name" value="Actin, Chain A, domain 4"/>
    <property type="match status" value="1"/>
</dbReference>
<dbReference type="Gene3D" id="2.60.34.10">
    <property type="entry name" value="Substrate Binding Domain Of DNAk, Chain A, domain 1"/>
    <property type="match status" value="1"/>
</dbReference>
<dbReference type="HAMAP" id="MF_00332">
    <property type="entry name" value="DnaK"/>
    <property type="match status" value="1"/>
</dbReference>
<dbReference type="InterPro" id="IPR043129">
    <property type="entry name" value="ATPase_NBD"/>
</dbReference>
<dbReference type="InterPro" id="IPR012725">
    <property type="entry name" value="Chaperone_DnaK"/>
</dbReference>
<dbReference type="InterPro" id="IPR018181">
    <property type="entry name" value="Heat_shock_70_CS"/>
</dbReference>
<dbReference type="InterPro" id="IPR029048">
    <property type="entry name" value="HSP70_C_sf"/>
</dbReference>
<dbReference type="InterPro" id="IPR029047">
    <property type="entry name" value="HSP70_peptide-bd_sf"/>
</dbReference>
<dbReference type="InterPro" id="IPR013126">
    <property type="entry name" value="Hsp_70_fam"/>
</dbReference>
<dbReference type="NCBIfam" id="NF001413">
    <property type="entry name" value="PRK00290.1"/>
    <property type="match status" value="1"/>
</dbReference>
<dbReference type="NCBIfam" id="NF003520">
    <property type="entry name" value="PRK05183.1"/>
    <property type="match status" value="1"/>
</dbReference>
<dbReference type="NCBIfam" id="TIGR02350">
    <property type="entry name" value="prok_dnaK"/>
    <property type="match status" value="1"/>
</dbReference>
<dbReference type="PANTHER" id="PTHR19375">
    <property type="entry name" value="HEAT SHOCK PROTEIN 70KDA"/>
    <property type="match status" value="1"/>
</dbReference>
<dbReference type="Pfam" id="PF00012">
    <property type="entry name" value="HSP70"/>
    <property type="match status" value="1"/>
</dbReference>
<dbReference type="PRINTS" id="PR00301">
    <property type="entry name" value="HEATSHOCK70"/>
</dbReference>
<dbReference type="SUPFAM" id="SSF53067">
    <property type="entry name" value="Actin-like ATPase domain"/>
    <property type="match status" value="2"/>
</dbReference>
<dbReference type="SUPFAM" id="SSF100934">
    <property type="entry name" value="Heat shock protein 70kD (HSP70), C-terminal subdomain"/>
    <property type="match status" value="1"/>
</dbReference>
<dbReference type="SUPFAM" id="SSF100920">
    <property type="entry name" value="Heat shock protein 70kD (HSP70), peptide-binding domain"/>
    <property type="match status" value="1"/>
</dbReference>
<dbReference type="PROSITE" id="PS00297">
    <property type="entry name" value="HSP70_1"/>
    <property type="match status" value="1"/>
</dbReference>
<dbReference type="PROSITE" id="PS00329">
    <property type="entry name" value="HSP70_2"/>
    <property type="match status" value="1"/>
</dbReference>
<dbReference type="PROSITE" id="PS01036">
    <property type="entry name" value="HSP70_3"/>
    <property type="match status" value="1"/>
</dbReference>
<keyword id="KW-0067">ATP-binding</keyword>
<keyword id="KW-0143">Chaperone</keyword>
<keyword id="KW-0547">Nucleotide-binding</keyword>
<keyword id="KW-0597">Phosphoprotein</keyword>
<keyword id="KW-0346">Stress response</keyword>